<protein>
    <recommendedName>
        <fullName>V-type proton ATPase catalytic subunit A</fullName>
        <shortName>V-ATPase subunit A</shortName>
        <ecNumber evidence="3">7.1.2.2</ecNumber>
    </recommendedName>
    <alternativeName>
        <fullName>V-ATPase 69 kDa subunit</fullName>
    </alternativeName>
    <alternativeName>
        <fullName>Vacuolar proton pump subunit alpha</fullName>
    </alternativeName>
</protein>
<feature type="chain" id="PRO_0000144569" description="V-type proton ATPase catalytic subunit A">
    <location>
        <begin position="1"/>
        <end position="611"/>
    </location>
</feature>
<feature type="binding site" evidence="2">
    <location>
        <begin position="244"/>
        <end position="251"/>
    </location>
    <ligand>
        <name>ATP</name>
        <dbReference type="ChEBI" id="CHEBI:30616"/>
    </ligand>
</feature>
<reference evidence="9" key="1">
    <citation type="journal article" date="1993" name="Mol. Biochem. Parasitol.">
        <title>Cloning and characterization of a vacuolar ATPase A subunit homologue from Plasmodium falciparum.</title>
        <authorList>
            <person name="Karcz S.R."/>
            <person name="Herrmann V.R."/>
            <person name="Cowman A.F."/>
        </authorList>
    </citation>
    <scope>NUCLEOTIDE SEQUENCE [GENOMIC DNA]</scope>
    <scope>DEVELOPMENTAL STAGE</scope>
    <source>
        <strain evidence="6">3D7</strain>
    </source>
</reference>
<reference key="2">
    <citation type="journal article" date="2002" name="Nature">
        <title>Genome sequence of the human malaria parasite Plasmodium falciparum.</title>
        <authorList>
            <person name="Gardner M.J."/>
            <person name="Hall N."/>
            <person name="Fung E."/>
            <person name="White O."/>
            <person name="Berriman M."/>
            <person name="Hyman R.W."/>
            <person name="Carlton J.M."/>
            <person name="Pain A."/>
            <person name="Nelson K.E."/>
            <person name="Bowman S."/>
            <person name="Paulsen I.T."/>
            <person name="James K.D."/>
            <person name="Eisen J.A."/>
            <person name="Rutherford K.M."/>
            <person name="Salzberg S.L."/>
            <person name="Craig A."/>
            <person name="Kyes S."/>
            <person name="Chan M.-S."/>
            <person name="Nene V."/>
            <person name="Shallom S.J."/>
            <person name="Suh B."/>
            <person name="Peterson J."/>
            <person name="Angiuoli S."/>
            <person name="Pertea M."/>
            <person name="Allen J."/>
            <person name="Selengut J."/>
            <person name="Haft D."/>
            <person name="Mather M.W."/>
            <person name="Vaidya A.B."/>
            <person name="Martin D.M.A."/>
            <person name="Fairlamb A.H."/>
            <person name="Fraunholz M.J."/>
            <person name="Roos D.S."/>
            <person name="Ralph S.A."/>
            <person name="McFadden G.I."/>
            <person name="Cummings L.M."/>
            <person name="Subramanian G.M."/>
            <person name="Mungall C."/>
            <person name="Venter J.C."/>
            <person name="Carucci D.J."/>
            <person name="Hoffman S.L."/>
            <person name="Newbold C."/>
            <person name="Davis R.W."/>
            <person name="Fraser C.M."/>
            <person name="Barrell B.G."/>
        </authorList>
    </citation>
    <scope>NUCLEOTIDE SEQUENCE [LARGE SCALE GENOMIC DNA]</scope>
    <source>
        <strain>3D7</strain>
    </source>
</reference>
<reference key="3">
    <citation type="journal article" date="2002" name="Nature">
        <title>Sequence of Plasmodium falciparum chromosomes 1, 3-9 and 13.</title>
        <authorList>
            <person name="Hall N."/>
            <person name="Pain A."/>
            <person name="Berriman M."/>
            <person name="Churcher C.M."/>
            <person name="Harris B."/>
            <person name="Harris D."/>
            <person name="Mungall K.L."/>
            <person name="Bowman S."/>
            <person name="Atkin R."/>
            <person name="Baker S."/>
            <person name="Barron A."/>
            <person name="Brooks K."/>
            <person name="Buckee C.O."/>
            <person name="Burrows C."/>
            <person name="Cherevach I."/>
            <person name="Chillingworth C."/>
            <person name="Chillingworth T."/>
            <person name="Christodoulou Z."/>
            <person name="Clark L."/>
            <person name="Clark R."/>
            <person name="Corton C."/>
            <person name="Cronin A."/>
            <person name="Davies R.M."/>
            <person name="Davis P."/>
            <person name="Dear P."/>
            <person name="Dearden F."/>
            <person name="Doggett J."/>
            <person name="Feltwell T."/>
            <person name="Goble A."/>
            <person name="Goodhead I."/>
            <person name="Gwilliam R."/>
            <person name="Hamlin N."/>
            <person name="Hance Z."/>
            <person name="Harper D."/>
            <person name="Hauser H."/>
            <person name="Hornsby T."/>
            <person name="Holroyd S."/>
            <person name="Horrocks P."/>
            <person name="Humphray S."/>
            <person name="Jagels K."/>
            <person name="James K.D."/>
            <person name="Johnson D."/>
            <person name="Kerhornou A."/>
            <person name="Knights A."/>
            <person name="Konfortov B."/>
            <person name="Kyes S."/>
            <person name="Larke N."/>
            <person name="Lawson D."/>
            <person name="Lennard N."/>
            <person name="Line A."/>
            <person name="Maddison M."/>
            <person name="Mclean J."/>
            <person name="Mooney P."/>
            <person name="Moule S."/>
            <person name="Murphy L."/>
            <person name="Oliver K."/>
            <person name="Ormond D."/>
            <person name="Price C."/>
            <person name="Quail M.A."/>
            <person name="Rabbinowitsch E."/>
            <person name="Rajandream M.A."/>
            <person name="Rutter S."/>
            <person name="Rutherford K.M."/>
            <person name="Sanders M."/>
            <person name="Simmonds M."/>
            <person name="Seeger K."/>
            <person name="Sharp S."/>
            <person name="Smith R."/>
            <person name="Squares R."/>
            <person name="Squares S."/>
            <person name="Stevens K."/>
            <person name="Taylor K."/>
            <person name="Tivey A."/>
            <person name="Unwin L."/>
            <person name="Whitehead S."/>
            <person name="Woodward J.R."/>
            <person name="Sulston J.E."/>
            <person name="Craig A."/>
            <person name="Newbold C."/>
            <person name="Barrell B.G."/>
        </authorList>
    </citation>
    <scope>NUCLEOTIDE SEQUENCE [LARGE SCALE GENOMIC DNA]</scope>
    <source>
        <strain>3D7</strain>
    </source>
</reference>
<reference key="4">
    <citation type="journal article" date="2000" name="J. Biol. Chem.">
        <title>Vacuolar H(+)-ATPase localized in plasma membranes of malaria parasite cells, Plasmodium falciparum, is involved in regional acidification of parasitized erythrocytes.</title>
        <authorList>
            <person name="Hayashi M."/>
            <person name="Yamada H."/>
            <person name="Mitamura T."/>
            <person name="Horii T."/>
            <person name="Yamamoto A."/>
            <person name="Moriyama Y."/>
        </authorList>
    </citation>
    <scope>FUNCTION</scope>
    <scope>SUBCELLULAR LOCATION</scope>
    <source>
        <strain evidence="4">FCR-3</strain>
    </source>
</reference>
<reference key="5">
    <citation type="journal article" date="2007" name="PLoS ONE">
        <title>Rapid identification of malaria vaccine candidates based on alpha-helical coiled coil protein motif.</title>
        <authorList>
            <person name="Villard V."/>
            <person name="Agak G.W."/>
            <person name="Frank G."/>
            <person name="Jafarshad A."/>
            <person name="Servis C."/>
            <person name="Nebie I."/>
            <person name="Sirima S.B."/>
            <person name="Felger I."/>
            <person name="Arevalo-Herrera M."/>
            <person name="Herrera S."/>
            <person name="Heitz F."/>
            <person name="Baecker V."/>
            <person name="Druilhe P."/>
            <person name="Kajava A.V."/>
            <person name="Corradin G."/>
        </authorList>
    </citation>
    <scope>SYNTHESIS OF 446-478</scope>
    <scope>POSSIBLE CANDIDATE MALARIA EPITOPE</scope>
</reference>
<name>VATA_PLAF7</name>
<dbReference type="EC" id="7.1.2.2" evidence="3"/>
<dbReference type="EMBL" id="L08200">
    <property type="protein sequence ID" value="AAA29782.1"/>
    <property type="molecule type" value="Genomic_DNA"/>
</dbReference>
<dbReference type="EMBL" id="AL844509">
    <property type="protein sequence ID" value="CAD52254.1"/>
    <property type="molecule type" value="Genomic_DNA"/>
</dbReference>
<dbReference type="PIR" id="A48582">
    <property type="entry name" value="A48582"/>
</dbReference>
<dbReference type="RefSeq" id="XP_001349847.1">
    <property type="nucleotide sequence ID" value="XM_001349811.1"/>
</dbReference>
<dbReference type="SMR" id="Q76NM6"/>
<dbReference type="FunCoup" id="Q76NM6">
    <property type="interactions" value="250"/>
</dbReference>
<dbReference type="STRING" id="36329.Q76NM6"/>
<dbReference type="DrugBank" id="DB11638">
    <property type="generic name" value="Artenimol"/>
</dbReference>
<dbReference type="TCDB" id="3.A.2.2.10">
    <property type="family name" value="the h+- or na+-translocating f-type, v-type and a-type atpase (f-atpase) superfamily"/>
</dbReference>
<dbReference type="PaxDb" id="5833-PF13_0065"/>
<dbReference type="EnsemblProtists" id="CAD52254">
    <property type="protein sequence ID" value="CAD52254"/>
    <property type="gene ID" value="PF3D7_1311900"/>
</dbReference>
<dbReference type="GeneID" id="814043"/>
<dbReference type="KEGG" id="pfa:PF3D7_1311900"/>
<dbReference type="VEuPathDB" id="PlasmoDB:PF3D7_1311900"/>
<dbReference type="VEuPathDB" id="PlasmoDB:Pf7G8-2_000415100"/>
<dbReference type="VEuPathDB" id="PlasmoDB:Pf7G8_130016300"/>
<dbReference type="VEuPathDB" id="PlasmoDB:PfCD01_130017400"/>
<dbReference type="VEuPathDB" id="PlasmoDB:PfDd2_130017700"/>
<dbReference type="VEuPathDB" id="PlasmoDB:PfGA01_130017900"/>
<dbReference type="VEuPathDB" id="PlasmoDB:PfGB4_130017800"/>
<dbReference type="VEuPathDB" id="PlasmoDB:PfGN01_130018600"/>
<dbReference type="VEuPathDB" id="PlasmoDB:PfHB3_130018200"/>
<dbReference type="VEuPathDB" id="PlasmoDB:PfIT_130017100"/>
<dbReference type="VEuPathDB" id="PlasmoDB:PfKE01_130017500"/>
<dbReference type="VEuPathDB" id="PlasmoDB:PfKH01_130016100"/>
<dbReference type="VEuPathDB" id="PlasmoDB:PfKH02_130014800"/>
<dbReference type="VEuPathDB" id="PlasmoDB:PfML01_130015100"/>
<dbReference type="VEuPathDB" id="PlasmoDB:PfNF135_130016900"/>
<dbReference type="VEuPathDB" id="PlasmoDB:PfNF166_130017500"/>
<dbReference type="VEuPathDB" id="PlasmoDB:PfNF54_130017200"/>
<dbReference type="VEuPathDB" id="PlasmoDB:PfSD01_130018600"/>
<dbReference type="VEuPathDB" id="PlasmoDB:PfSN01_130014900"/>
<dbReference type="VEuPathDB" id="PlasmoDB:PfTG01_130017600"/>
<dbReference type="HOGENOM" id="CLU_008162_3_1_1"/>
<dbReference type="InParanoid" id="Q76NM6"/>
<dbReference type="OMA" id="RIVKTFW"/>
<dbReference type="OrthoDB" id="1676488at2759"/>
<dbReference type="PhylomeDB" id="Q76NM6"/>
<dbReference type="Reactome" id="R-PFA-1222556">
    <property type="pathway name" value="ROS and RNS production in phagocytes"/>
</dbReference>
<dbReference type="Reactome" id="R-PFA-77387">
    <property type="pathway name" value="Insulin receptor recycling"/>
</dbReference>
<dbReference type="Reactome" id="R-PFA-917977">
    <property type="pathway name" value="Transferrin endocytosis and recycling"/>
</dbReference>
<dbReference type="Proteomes" id="UP000001450">
    <property type="component" value="Chromosome 13"/>
</dbReference>
<dbReference type="GO" id="GO:0020020">
    <property type="term" value="C:food vacuole"/>
    <property type="evidence" value="ECO:0000314"/>
    <property type="project" value="GeneDB"/>
</dbReference>
<dbReference type="GO" id="GO:0005886">
    <property type="term" value="C:plasma membrane"/>
    <property type="evidence" value="ECO:0007669"/>
    <property type="project" value="UniProtKB-SubCell"/>
</dbReference>
<dbReference type="GO" id="GO:0000221">
    <property type="term" value="C:vacuolar proton-transporting V-type ATPase, V1 domain"/>
    <property type="evidence" value="ECO:0000250"/>
    <property type="project" value="GeneDB"/>
</dbReference>
<dbReference type="GO" id="GO:0005524">
    <property type="term" value="F:ATP binding"/>
    <property type="evidence" value="ECO:0007669"/>
    <property type="project" value="UniProtKB-KW"/>
</dbReference>
<dbReference type="GO" id="GO:0016887">
    <property type="term" value="F:ATP hydrolysis activity"/>
    <property type="evidence" value="ECO:0007669"/>
    <property type="project" value="InterPro"/>
</dbReference>
<dbReference type="GO" id="GO:0046961">
    <property type="term" value="F:proton-transporting ATPase activity, rotational mechanism"/>
    <property type="evidence" value="ECO:0000318"/>
    <property type="project" value="GO_Central"/>
</dbReference>
<dbReference type="GO" id="GO:0046034">
    <property type="term" value="P:ATP metabolic process"/>
    <property type="evidence" value="ECO:0007669"/>
    <property type="project" value="InterPro"/>
</dbReference>
<dbReference type="GO" id="GO:1902600">
    <property type="term" value="P:proton transmembrane transport"/>
    <property type="evidence" value="ECO:0000250"/>
    <property type="project" value="GeneDB"/>
</dbReference>
<dbReference type="GO" id="GO:0007035">
    <property type="term" value="P:vacuolar acidification"/>
    <property type="evidence" value="ECO:0000250"/>
    <property type="project" value="GeneDB"/>
</dbReference>
<dbReference type="CDD" id="cd18111">
    <property type="entry name" value="ATP-synt_V_A-type_alpha_C"/>
    <property type="match status" value="1"/>
</dbReference>
<dbReference type="CDD" id="cd18119">
    <property type="entry name" value="ATP-synt_V_A-type_alpha_N"/>
    <property type="match status" value="1"/>
</dbReference>
<dbReference type="CDD" id="cd01134">
    <property type="entry name" value="V_A-ATPase_A"/>
    <property type="match status" value="1"/>
</dbReference>
<dbReference type="FunFam" id="1.10.1140.10:FF:000002">
    <property type="entry name" value="V-type proton ATPase catalytic subunit A"/>
    <property type="match status" value="1"/>
</dbReference>
<dbReference type="FunFam" id="2.40.30.20:FF:000009">
    <property type="entry name" value="V-type proton ATPase catalytic subunit A"/>
    <property type="match status" value="1"/>
</dbReference>
<dbReference type="FunFam" id="2.40.50.100:FF:000008">
    <property type="entry name" value="V-type proton ATPase catalytic subunit A"/>
    <property type="match status" value="1"/>
</dbReference>
<dbReference type="FunFam" id="3.40.50.300:FF:000052">
    <property type="entry name" value="V-type proton ATPase catalytic subunit A"/>
    <property type="match status" value="1"/>
</dbReference>
<dbReference type="Gene3D" id="2.40.30.20">
    <property type="match status" value="1"/>
</dbReference>
<dbReference type="Gene3D" id="2.40.50.100">
    <property type="match status" value="1"/>
</dbReference>
<dbReference type="Gene3D" id="1.10.1140.10">
    <property type="entry name" value="Bovine Mitochondrial F1-atpase, Atp Synthase Beta Chain, Chain D, domain 3"/>
    <property type="match status" value="1"/>
</dbReference>
<dbReference type="Gene3D" id="3.40.50.300">
    <property type="entry name" value="P-loop containing nucleotide triphosphate hydrolases"/>
    <property type="match status" value="1"/>
</dbReference>
<dbReference type="HAMAP" id="MF_00309">
    <property type="entry name" value="ATP_synth_A_arch"/>
    <property type="match status" value="1"/>
</dbReference>
<dbReference type="InterPro" id="IPR055190">
    <property type="entry name" value="ATP-synt_VA_C"/>
</dbReference>
<dbReference type="InterPro" id="IPR031686">
    <property type="entry name" value="ATP-synth_a_Xtn"/>
</dbReference>
<dbReference type="InterPro" id="IPR023366">
    <property type="entry name" value="ATP_synth_asu-like_sf"/>
</dbReference>
<dbReference type="InterPro" id="IPR020003">
    <property type="entry name" value="ATPase_a/bsu_AS"/>
</dbReference>
<dbReference type="InterPro" id="IPR004100">
    <property type="entry name" value="ATPase_F1/V1/A1_a/bsu_N"/>
</dbReference>
<dbReference type="InterPro" id="IPR036121">
    <property type="entry name" value="ATPase_F1/V1/A1_a/bsu_N_sf"/>
</dbReference>
<dbReference type="InterPro" id="IPR000194">
    <property type="entry name" value="ATPase_F1/V1/A1_a/bsu_nucl-bd"/>
</dbReference>
<dbReference type="InterPro" id="IPR024034">
    <property type="entry name" value="ATPase_F1/V1_b/a_C"/>
</dbReference>
<dbReference type="InterPro" id="IPR005725">
    <property type="entry name" value="ATPase_V1-cplx_asu"/>
</dbReference>
<dbReference type="InterPro" id="IPR027417">
    <property type="entry name" value="P-loop_NTPase"/>
</dbReference>
<dbReference type="InterPro" id="IPR022878">
    <property type="entry name" value="V-ATPase_asu"/>
</dbReference>
<dbReference type="NCBIfam" id="NF003220">
    <property type="entry name" value="PRK04192.1"/>
    <property type="match status" value="1"/>
</dbReference>
<dbReference type="NCBIfam" id="TIGR01042">
    <property type="entry name" value="V-ATPase_V1_A"/>
    <property type="match status" value="1"/>
</dbReference>
<dbReference type="PANTHER" id="PTHR43607:SF1">
    <property type="entry name" value="H(+)-TRANSPORTING TWO-SECTOR ATPASE"/>
    <property type="match status" value="1"/>
</dbReference>
<dbReference type="PANTHER" id="PTHR43607">
    <property type="entry name" value="V-TYPE PROTON ATPASE CATALYTIC SUBUNIT A"/>
    <property type="match status" value="1"/>
</dbReference>
<dbReference type="Pfam" id="PF00006">
    <property type="entry name" value="ATP-synt_ab"/>
    <property type="match status" value="1"/>
</dbReference>
<dbReference type="Pfam" id="PF02874">
    <property type="entry name" value="ATP-synt_ab_N"/>
    <property type="match status" value="1"/>
</dbReference>
<dbReference type="Pfam" id="PF16886">
    <property type="entry name" value="ATP-synt_ab_Xtn"/>
    <property type="match status" value="1"/>
</dbReference>
<dbReference type="Pfam" id="PF22919">
    <property type="entry name" value="ATP-synt_VA_C"/>
    <property type="match status" value="1"/>
</dbReference>
<dbReference type="SUPFAM" id="SSF47917">
    <property type="entry name" value="C-terminal domain of alpha and beta subunits of F1 ATP synthase"/>
    <property type="match status" value="1"/>
</dbReference>
<dbReference type="SUPFAM" id="SSF50615">
    <property type="entry name" value="N-terminal domain of alpha and beta subunits of F1 ATP synthase"/>
    <property type="match status" value="1"/>
</dbReference>
<dbReference type="SUPFAM" id="SSF52540">
    <property type="entry name" value="P-loop containing nucleoside triphosphate hydrolases"/>
    <property type="match status" value="1"/>
</dbReference>
<dbReference type="PROSITE" id="PS00152">
    <property type="entry name" value="ATPASE_ALPHA_BETA"/>
    <property type="match status" value="1"/>
</dbReference>
<proteinExistence type="evidence at protein level"/>
<evidence type="ECO:0000250" key="1">
    <source>
        <dbReference type="UniProtKB" id="P31404"/>
    </source>
</evidence>
<evidence type="ECO:0000250" key="2">
    <source>
        <dbReference type="UniProtKB" id="P38606"/>
    </source>
</evidence>
<evidence type="ECO:0000250" key="3">
    <source>
        <dbReference type="UniProtKB" id="P50516"/>
    </source>
</evidence>
<evidence type="ECO:0000269" key="4">
    <source>
    </source>
</evidence>
<evidence type="ECO:0000269" key="5">
    <source>
    </source>
</evidence>
<evidence type="ECO:0000269" key="6">
    <source>
    </source>
</evidence>
<evidence type="ECO:0000303" key="7">
    <source>
    </source>
</evidence>
<evidence type="ECO:0000305" key="8"/>
<evidence type="ECO:0000312" key="9">
    <source>
        <dbReference type="EMBL" id="AAA29782.1"/>
    </source>
</evidence>
<sequence length="611" mass="68576">MTKVAVEKEEPGVVYKVAGSLVIAENMSGTRMYELAKVGWNKLVGEIIRLEGNYAYIQVYEDTSGLSVGDPVIKTGNALSVELGPGILDNIYDGIQRPLERIANVCGDVYIYKGIDMTSLDHDKQWQFYADKKLKLNDIVTGGDIFGFVDENKLFKEHKIMAPPNAKGRLTYIAPDGSYTLKDKIFELEYQGKKYTYGLSHLWPVRDPRPVLEKVTGDTLLLTGQRVLDSLFPTVQGGTCAIPGAFGCGKTCVSQALSKYSNSEVIIYVGCGERGNEMAEILSDFPELTTKVDNEDVGIMQRTCLVANTSNMPVAAREASIYTGITLCEYFRDMGYNATMMADSTSRWAEALREISGRLAEMPADSGYPAYLGARLASFYERAGKVKCIGSPSRIGSITIVGAVSPPGGDFSDPVTTATMSIVQAFWGLDKKLAQRKHFPSVNWSTSFSKYVRQLEQYFDNFDQDFLSLRQKISDILQQESDLNDIVQLVGKDSLSEDQKVVMEVAKIIREDFLQQNAFSDYDYMCPLQKTVGMMRIICHFYAQCLRTLQEYDSRERKIGWGSIYNTLRPTINKITHMKFENPKNSDEYFKKYFKALEEEITVGLRNLMEK</sequence>
<gene>
    <name evidence="7" type="primary">vapA</name>
    <name type="ORF">PF13_0065</name>
    <name type="ORF">PF3D7_1311900</name>
</gene>
<organism>
    <name type="scientific">Plasmodium falciparum (isolate 3D7)</name>
    <dbReference type="NCBI Taxonomy" id="36329"/>
    <lineage>
        <taxon>Eukaryota</taxon>
        <taxon>Sar</taxon>
        <taxon>Alveolata</taxon>
        <taxon>Apicomplexa</taxon>
        <taxon>Aconoidasida</taxon>
        <taxon>Haemosporida</taxon>
        <taxon>Plasmodiidae</taxon>
        <taxon>Plasmodium</taxon>
        <taxon>Plasmodium (Laverania)</taxon>
    </lineage>
</organism>
<comment type="function">
    <text evidence="2 4">Catalytic subunit of the V1 complex of vacuolar(H+)-ATPase (V-ATPase), a multisubunit enzyme composed of a peripheral complex (V1) that hydrolyzes ATP and a membrane integral complex (V0) that translocates protons (By similarity). V-ATPase is responsible for acidifying and maintaining the pH of intracellular compartments and in some cell types, is targeted to the plasma membrane, where it is responsible for acidifying the extracellular environment (PubMed:10915784). During the trophozoite stage, involved in the acidification of the extracellular space next to the cell membrane (PubMed:10915784).</text>
</comment>
<comment type="catalytic activity">
    <reaction evidence="3">
        <text>ATP + H2O + 4 H(+)(in) = ADP + phosphate + 5 H(+)(out)</text>
        <dbReference type="Rhea" id="RHEA:57720"/>
        <dbReference type="ChEBI" id="CHEBI:15377"/>
        <dbReference type="ChEBI" id="CHEBI:15378"/>
        <dbReference type="ChEBI" id="CHEBI:30616"/>
        <dbReference type="ChEBI" id="CHEBI:43474"/>
        <dbReference type="ChEBI" id="CHEBI:456216"/>
        <dbReference type="EC" id="7.1.2.2"/>
    </reaction>
</comment>
<comment type="activity regulation">
    <text evidence="1">ATP hydrolysis occurs at the interface between the nucleotide-binding domains of subunits A and B (By similarity). ATP hydrolysis triggers a conformational change in the subunits D and F, which induces a shift of subunit d (By similarity). The c-ring is subsequently rotated and results in a continuous proton translocation across the membrane (By similarity).</text>
</comment>
<comment type="subunit">
    <text evidence="2">V-ATPase is a heteromultimeric enzyme made up of two complexes: the ATP-hydrolytic V1 complex and the proton translocation V0 complex (By similarity). The V1 complex consists of three catalytic AB heterodimers that form a heterohexamer, three peripheral stalks each consisting of EG heterodimers, one central rotor including subunits D and F, and the regulatory subunits C and H (By similarity). The proton translocation complex V0 consists of the proton transport subunit a, a ring of proteolipid subunits c9c'', rotary subunit d and subunit e (By similarity).</text>
</comment>
<comment type="subcellular location">
    <subcellularLocation>
        <location evidence="4">Cell membrane</location>
        <topology evidence="4">Peripheral membrane protein</topology>
        <orientation evidence="4">Cytoplasmic side</orientation>
    </subcellularLocation>
    <subcellularLocation>
        <location evidence="4">Vacuole</location>
    </subcellularLocation>
    <subcellularLocation>
        <location evidence="4">Vesicle</location>
    </subcellularLocation>
</comment>
<comment type="developmental stage">
    <text evidence="6">Expressed during the asexual blood stage, including in trophozoites (at protein level).</text>
</comment>
<comment type="biotechnology">
    <text evidence="5">Possible candidate for an effective malaria vaccine as determined by epitope response in sera.</text>
</comment>
<comment type="similarity">
    <text evidence="8">Belongs to the ATPase alpha/beta chains family.</text>
</comment>
<accession>Q76NM6</accession>
<accession>Q03498</accession>
<keyword id="KW-0067">ATP-binding</keyword>
<keyword id="KW-1003">Cell membrane</keyword>
<keyword id="KW-0375">Hydrogen ion transport</keyword>
<keyword id="KW-0406">Ion transport</keyword>
<keyword id="KW-0472">Membrane</keyword>
<keyword id="KW-0477">Merozoite</keyword>
<keyword id="KW-0547">Nucleotide-binding</keyword>
<keyword id="KW-1185">Reference proteome</keyword>
<keyword id="KW-1278">Translocase</keyword>
<keyword id="KW-0813">Transport</keyword>
<keyword id="KW-0926">Vacuole</keyword>